<dbReference type="EC" id="2.7.7.4" evidence="2"/>
<dbReference type="EMBL" id="AF035608">
    <property type="protein sequence ID" value="AAC46386.1"/>
    <property type="molecule type" value="Genomic_DNA"/>
</dbReference>
<dbReference type="EMBL" id="AE004091">
    <property type="protein sequence ID" value="AAG07831.1"/>
    <property type="molecule type" value="Genomic_DNA"/>
</dbReference>
<dbReference type="PIR" id="E83091">
    <property type="entry name" value="E83091"/>
</dbReference>
<dbReference type="RefSeq" id="NP_253133.1">
    <property type="nucleotide sequence ID" value="NC_002516.2"/>
</dbReference>
<dbReference type="RefSeq" id="WP_003094311.1">
    <property type="nucleotide sequence ID" value="NZ_QZGE01000004.1"/>
</dbReference>
<dbReference type="SMR" id="O50273"/>
<dbReference type="FunCoup" id="O50273">
    <property type="interactions" value="140"/>
</dbReference>
<dbReference type="STRING" id="208964.PA4443"/>
<dbReference type="PaxDb" id="208964-PA4443"/>
<dbReference type="GeneID" id="880980"/>
<dbReference type="KEGG" id="pae:PA4443"/>
<dbReference type="PATRIC" id="fig|208964.12.peg.4652"/>
<dbReference type="PseudoCAP" id="PA4443"/>
<dbReference type="HOGENOM" id="CLU_043026_0_0_6"/>
<dbReference type="InParanoid" id="O50273"/>
<dbReference type="OrthoDB" id="9772604at2"/>
<dbReference type="PhylomeDB" id="O50273"/>
<dbReference type="BioCyc" id="PAER208964:G1FZ6-4531-MONOMER"/>
<dbReference type="UniPathway" id="UPA00140">
    <property type="reaction ID" value="UER00204"/>
</dbReference>
<dbReference type="Proteomes" id="UP000002438">
    <property type="component" value="Chromosome"/>
</dbReference>
<dbReference type="GO" id="GO:0005524">
    <property type="term" value="F:ATP binding"/>
    <property type="evidence" value="ECO:0007669"/>
    <property type="project" value="UniProtKB-KW"/>
</dbReference>
<dbReference type="GO" id="GO:0004781">
    <property type="term" value="F:sulfate adenylyltransferase (ATP) activity"/>
    <property type="evidence" value="ECO:0007669"/>
    <property type="project" value="UniProtKB-UniRule"/>
</dbReference>
<dbReference type="GO" id="GO:0070814">
    <property type="term" value="P:hydrogen sulfide biosynthetic process"/>
    <property type="evidence" value="ECO:0007669"/>
    <property type="project" value="UniProtKB-UniRule"/>
</dbReference>
<dbReference type="GO" id="GO:0000103">
    <property type="term" value="P:sulfate assimilation"/>
    <property type="evidence" value="ECO:0007669"/>
    <property type="project" value="UniProtKB-UniRule"/>
</dbReference>
<dbReference type="CDD" id="cd23946">
    <property type="entry name" value="Sulfate_adenylyltransferase_2"/>
    <property type="match status" value="1"/>
</dbReference>
<dbReference type="FunFam" id="3.40.50.620:FF:000002">
    <property type="entry name" value="Sulfate adenylyltransferase subunit 2"/>
    <property type="match status" value="1"/>
</dbReference>
<dbReference type="Gene3D" id="3.40.50.620">
    <property type="entry name" value="HUPs"/>
    <property type="match status" value="1"/>
</dbReference>
<dbReference type="HAMAP" id="MF_00064">
    <property type="entry name" value="Sulf_adenylyltr_sub2"/>
    <property type="match status" value="1"/>
</dbReference>
<dbReference type="InterPro" id="IPR002500">
    <property type="entry name" value="PAPS_reduct_dom"/>
</dbReference>
<dbReference type="InterPro" id="IPR014729">
    <property type="entry name" value="Rossmann-like_a/b/a_fold"/>
</dbReference>
<dbReference type="InterPro" id="IPR011784">
    <property type="entry name" value="SO4_adenylTrfase_ssu"/>
</dbReference>
<dbReference type="InterPro" id="IPR050128">
    <property type="entry name" value="Sulfate_adenylyltrnsfr_sub2"/>
</dbReference>
<dbReference type="NCBIfam" id="TIGR02039">
    <property type="entry name" value="CysD"/>
    <property type="match status" value="1"/>
</dbReference>
<dbReference type="NCBIfam" id="NF003587">
    <property type="entry name" value="PRK05253.1"/>
    <property type="match status" value="1"/>
</dbReference>
<dbReference type="NCBIfam" id="NF009214">
    <property type="entry name" value="PRK12563.1"/>
    <property type="match status" value="1"/>
</dbReference>
<dbReference type="PANTHER" id="PTHR43196">
    <property type="entry name" value="SULFATE ADENYLYLTRANSFERASE SUBUNIT 2"/>
    <property type="match status" value="1"/>
</dbReference>
<dbReference type="PANTHER" id="PTHR43196:SF1">
    <property type="entry name" value="SULFATE ADENYLYLTRANSFERASE SUBUNIT 2"/>
    <property type="match status" value="1"/>
</dbReference>
<dbReference type="Pfam" id="PF01507">
    <property type="entry name" value="PAPS_reduct"/>
    <property type="match status" value="1"/>
</dbReference>
<dbReference type="PIRSF" id="PIRSF002936">
    <property type="entry name" value="CysDAde_trans"/>
    <property type="match status" value="1"/>
</dbReference>
<dbReference type="SUPFAM" id="SSF52402">
    <property type="entry name" value="Adenine nucleotide alpha hydrolases-like"/>
    <property type="match status" value="1"/>
</dbReference>
<comment type="function">
    <text evidence="2">With CysN forms the ATP sulfurylase (ATPS) that catalyzes the adenylation of sulfate producing adenosine 5'-phosphosulfate (APS) and diphosphate, the first enzymatic step in sulfur assimilation pathway. APS synthesis involves the formation of a high-energy phosphoric-sulfuric acid anhydride bond driven by GTP hydrolysis by CysN coupled to ATP hydrolysis by CysD.</text>
</comment>
<comment type="catalytic activity">
    <reaction evidence="2">
        <text>sulfate + ATP + H(+) = adenosine 5'-phosphosulfate + diphosphate</text>
        <dbReference type="Rhea" id="RHEA:18133"/>
        <dbReference type="ChEBI" id="CHEBI:15378"/>
        <dbReference type="ChEBI" id="CHEBI:16189"/>
        <dbReference type="ChEBI" id="CHEBI:30616"/>
        <dbReference type="ChEBI" id="CHEBI:33019"/>
        <dbReference type="ChEBI" id="CHEBI:58243"/>
        <dbReference type="EC" id="2.7.7.4"/>
    </reaction>
</comment>
<comment type="pathway">
    <text evidence="2">Sulfur metabolism; hydrogen sulfide biosynthesis; sulfite from sulfate: step 1/3.</text>
</comment>
<comment type="subunit">
    <text evidence="1">Heterodimer composed of CysD, the smaller subunit, and CysNC.</text>
</comment>
<comment type="similarity">
    <text evidence="2 3">Belongs to the PAPS reductase family. CysD subfamily.</text>
</comment>
<gene>
    <name evidence="2" type="primary">cysD</name>
    <name type="ordered locus">PA4443</name>
</gene>
<protein>
    <recommendedName>
        <fullName evidence="2">Sulfate adenylyltransferase subunit 2</fullName>
        <ecNumber evidence="2">2.7.7.4</ecNumber>
    </recommendedName>
    <alternativeName>
        <fullName evidence="2">ATP-sulfurylase small subunit</fullName>
    </alternativeName>
    <alternativeName>
        <fullName evidence="2">Sulfate adenylate transferase</fullName>
        <shortName evidence="2">SAT</shortName>
    </alternativeName>
</protein>
<evidence type="ECO:0000250" key="1"/>
<evidence type="ECO:0000255" key="2">
    <source>
        <dbReference type="HAMAP-Rule" id="MF_00064"/>
    </source>
</evidence>
<evidence type="ECO:0000305" key="3"/>
<reference key="1">
    <citation type="journal article" date="1998" name="Microbiology">
        <title>Regulation of the sulfate starvation response in Pseudomonas aeruginosa: role of cysteine biosynthetic intermediates.</title>
        <authorList>
            <person name="Hummerjohann J."/>
            <person name="Kuttel E."/>
            <person name="Quadroni M."/>
            <person name="Ragaller J."/>
            <person name="Leisinger T."/>
            <person name="Kertesz M.A."/>
        </authorList>
    </citation>
    <scope>NUCLEOTIDE SEQUENCE [GENOMIC DNA]</scope>
    <source>
        <strain>ATCC 15692 / DSM 22644 / CIP 104116 / JCM 14847 / LMG 12228 / 1C / PRS 101 / PAO1</strain>
    </source>
</reference>
<reference key="2">
    <citation type="journal article" date="2000" name="Nature">
        <title>Complete genome sequence of Pseudomonas aeruginosa PAO1, an opportunistic pathogen.</title>
        <authorList>
            <person name="Stover C.K."/>
            <person name="Pham X.-Q.T."/>
            <person name="Erwin A.L."/>
            <person name="Mizoguchi S.D."/>
            <person name="Warrener P."/>
            <person name="Hickey M.J."/>
            <person name="Brinkman F.S.L."/>
            <person name="Hufnagle W.O."/>
            <person name="Kowalik D.J."/>
            <person name="Lagrou M."/>
            <person name="Garber R.L."/>
            <person name="Goltry L."/>
            <person name="Tolentino E."/>
            <person name="Westbrock-Wadman S."/>
            <person name="Yuan Y."/>
            <person name="Brody L.L."/>
            <person name="Coulter S.N."/>
            <person name="Folger K.R."/>
            <person name="Kas A."/>
            <person name="Larbig K."/>
            <person name="Lim R.M."/>
            <person name="Smith K.A."/>
            <person name="Spencer D.H."/>
            <person name="Wong G.K.-S."/>
            <person name="Wu Z."/>
            <person name="Paulsen I.T."/>
            <person name="Reizer J."/>
            <person name="Saier M.H. Jr."/>
            <person name="Hancock R.E.W."/>
            <person name="Lory S."/>
            <person name="Olson M.V."/>
        </authorList>
    </citation>
    <scope>NUCLEOTIDE SEQUENCE [LARGE SCALE GENOMIC DNA]</scope>
    <source>
        <strain>ATCC 15692 / DSM 22644 / CIP 104116 / JCM 14847 / LMG 12228 / 1C / PRS 101 / PAO1</strain>
    </source>
</reference>
<keyword id="KW-0067">ATP-binding</keyword>
<keyword id="KW-0547">Nucleotide-binding</keyword>
<keyword id="KW-0548">Nucleotidyltransferase</keyword>
<keyword id="KW-1185">Reference proteome</keyword>
<keyword id="KW-0808">Transferase</keyword>
<proteinExistence type="inferred from homology"/>
<sequence length="305" mass="35479">MVDKLTHLKQLEAESIHIIREVAAEFDNPVMLYSIGKDSAVMLHLARKAFFPGKLPFPVMHVDTRWKFQEMYRFRDRMVEEMGLDLITHVNPDGVAQGINPFTHGSAKHTDVMKTEGLKQALDKYGFDAAFGGARRDEEKSRAKERVYSFRDSKHRWDPKNQRPELWNIYNGKVKKGESIRVFPLSNWTELDIWQYIYLEGIPIVPLYFAAEREVIEKNGTLIMIDDERILEHLSDEEKARIEKRMVRFRTLGCYPLTGAVESSATTLPEIIQEMLLTRTSERQGRVIDHDQAGSMEEKKRQGYF</sequence>
<feature type="chain" id="PRO_0000100669" description="Sulfate adenylyltransferase subunit 2">
    <location>
        <begin position="1"/>
        <end position="305"/>
    </location>
</feature>
<name>CYSD_PSEAE</name>
<accession>O50273</accession>
<organism>
    <name type="scientific">Pseudomonas aeruginosa (strain ATCC 15692 / DSM 22644 / CIP 104116 / JCM 14847 / LMG 12228 / 1C / PRS 101 / PAO1)</name>
    <dbReference type="NCBI Taxonomy" id="208964"/>
    <lineage>
        <taxon>Bacteria</taxon>
        <taxon>Pseudomonadati</taxon>
        <taxon>Pseudomonadota</taxon>
        <taxon>Gammaproteobacteria</taxon>
        <taxon>Pseudomonadales</taxon>
        <taxon>Pseudomonadaceae</taxon>
        <taxon>Pseudomonas</taxon>
    </lineage>
</organism>